<name>ZAPC_SHEFN</name>
<keyword id="KW-0131">Cell cycle</keyword>
<keyword id="KW-0132">Cell division</keyword>
<keyword id="KW-0963">Cytoplasm</keyword>
<keyword id="KW-1185">Reference proteome</keyword>
<keyword id="KW-0717">Septation</keyword>
<dbReference type="EMBL" id="CP000447">
    <property type="protein sequence ID" value="ABI72065.1"/>
    <property type="molecule type" value="Genomic_DNA"/>
</dbReference>
<dbReference type="RefSeq" id="WP_011637675.1">
    <property type="nucleotide sequence ID" value="NC_008345.1"/>
</dbReference>
<dbReference type="SMR" id="Q081K0"/>
<dbReference type="STRING" id="318167.Sfri_2219"/>
<dbReference type="KEGG" id="sfr:Sfri_2219"/>
<dbReference type="eggNOG" id="ENOG502Z8AH">
    <property type="taxonomic scope" value="Bacteria"/>
</dbReference>
<dbReference type="HOGENOM" id="CLU_128248_0_0_6"/>
<dbReference type="OrthoDB" id="5765005at2"/>
<dbReference type="Proteomes" id="UP000000684">
    <property type="component" value="Chromosome"/>
</dbReference>
<dbReference type="GO" id="GO:0005737">
    <property type="term" value="C:cytoplasm"/>
    <property type="evidence" value="ECO:0007669"/>
    <property type="project" value="UniProtKB-SubCell"/>
</dbReference>
<dbReference type="GO" id="GO:0000917">
    <property type="term" value="P:division septum assembly"/>
    <property type="evidence" value="ECO:0007669"/>
    <property type="project" value="UniProtKB-KW"/>
</dbReference>
<dbReference type="GO" id="GO:0043093">
    <property type="term" value="P:FtsZ-dependent cytokinesis"/>
    <property type="evidence" value="ECO:0007669"/>
    <property type="project" value="UniProtKB-UniRule"/>
</dbReference>
<dbReference type="HAMAP" id="MF_00906">
    <property type="entry name" value="ZapC"/>
    <property type="match status" value="1"/>
</dbReference>
<dbReference type="InterPro" id="IPR009809">
    <property type="entry name" value="ZapC"/>
</dbReference>
<dbReference type="InterPro" id="IPR048372">
    <property type="entry name" value="ZapC_C"/>
</dbReference>
<dbReference type="InterPro" id="IPR048373">
    <property type="entry name" value="ZapC_N"/>
</dbReference>
<dbReference type="Pfam" id="PF07126">
    <property type="entry name" value="ZapC_C"/>
    <property type="match status" value="1"/>
</dbReference>
<dbReference type="Pfam" id="PF21083">
    <property type="entry name" value="ZapC_N"/>
    <property type="match status" value="1"/>
</dbReference>
<dbReference type="PIRSF" id="PIRSF010252">
    <property type="entry name" value="ZapC"/>
    <property type="match status" value="1"/>
</dbReference>
<accession>Q081K0</accession>
<comment type="function">
    <text evidence="1">Contributes to the efficiency of the cell division process by stabilizing the polymeric form of the cell division protein FtsZ. Acts by promoting interactions between FtsZ protofilaments and suppressing the GTPase activity of FtsZ.</text>
</comment>
<comment type="subunit">
    <text evidence="1">Interacts directly with FtsZ.</text>
</comment>
<comment type="subcellular location">
    <subcellularLocation>
        <location evidence="1">Cytoplasm</location>
    </subcellularLocation>
</comment>
<comment type="similarity">
    <text evidence="1">Belongs to the ZapC family.</text>
</comment>
<sequence length="177" mass="20116">MLLMPNKDWHWEYNETCKQLSISLGSEMEFLTPYKTKLLIPDALTATEFNLEHAKFYIKMLETLPKVLHISDAGIVQTALNATAAHFLLQSQMPKSWFFDVSDECVYCEVGKLFQLNCGYSKVLALVVDNGLQAATVMILSQYCQLSDSKSLVQFDTIKVMHNRLHPLRKARQVVAA</sequence>
<protein>
    <recommendedName>
        <fullName evidence="1">Cell division protein ZapC</fullName>
    </recommendedName>
</protein>
<reference key="1">
    <citation type="submission" date="2006-08" db="EMBL/GenBank/DDBJ databases">
        <title>Complete sequence of Shewanella frigidimarina NCIMB 400.</title>
        <authorList>
            <consortium name="US DOE Joint Genome Institute"/>
            <person name="Copeland A."/>
            <person name="Lucas S."/>
            <person name="Lapidus A."/>
            <person name="Barry K."/>
            <person name="Detter J.C."/>
            <person name="Glavina del Rio T."/>
            <person name="Hammon N."/>
            <person name="Israni S."/>
            <person name="Dalin E."/>
            <person name="Tice H."/>
            <person name="Pitluck S."/>
            <person name="Fredrickson J.K."/>
            <person name="Kolker E."/>
            <person name="McCuel L.A."/>
            <person name="DiChristina T."/>
            <person name="Nealson K.H."/>
            <person name="Newman D."/>
            <person name="Tiedje J.M."/>
            <person name="Zhou J."/>
            <person name="Romine M.F."/>
            <person name="Culley D.E."/>
            <person name="Serres M."/>
            <person name="Chertkov O."/>
            <person name="Brettin T."/>
            <person name="Bruce D."/>
            <person name="Han C."/>
            <person name="Tapia R."/>
            <person name="Gilna P."/>
            <person name="Schmutz J."/>
            <person name="Larimer F."/>
            <person name="Land M."/>
            <person name="Hauser L."/>
            <person name="Kyrpides N."/>
            <person name="Mikhailova N."/>
            <person name="Richardson P."/>
        </authorList>
    </citation>
    <scope>NUCLEOTIDE SEQUENCE [LARGE SCALE GENOMIC DNA]</scope>
    <source>
        <strain>NCIMB 400</strain>
    </source>
</reference>
<gene>
    <name evidence="1" type="primary">zapC</name>
    <name type="ordered locus">Sfri_2219</name>
</gene>
<organism>
    <name type="scientific">Shewanella frigidimarina (strain NCIMB 400)</name>
    <dbReference type="NCBI Taxonomy" id="318167"/>
    <lineage>
        <taxon>Bacteria</taxon>
        <taxon>Pseudomonadati</taxon>
        <taxon>Pseudomonadota</taxon>
        <taxon>Gammaproteobacteria</taxon>
        <taxon>Alteromonadales</taxon>
        <taxon>Shewanellaceae</taxon>
        <taxon>Shewanella</taxon>
    </lineage>
</organism>
<proteinExistence type="inferred from homology"/>
<evidence type="ECO:0000255" key="1">
    <source>
        <dbReference type="HAMAP-Rule" id="MF_00906"/>
    </source>
</evidence>
<feature type="chain" id="PRO_0000413787" description="Cell division protein ZapC">
    <location>
        <begin position="1"/>
        <end position="177"/>
    </location>
</feature>